<organism>
    <name type="scientific">Rattus norvegicus</name>
    <name type="common">Rat</name>
    <dbReference type="NCBI Taxonomy" id="10116"/>
    <lineage>
        <taxon>Eukaryota</taxon>
        <taxon>Metazoa</taxon>
        <taxon>Chordata</taxon>
        <taxon>Craniata</taxon>
        <taxon>Vertebrata</taxon>
        <taxon>Euteleostomi</taxon>
        <taxon>Mammalia</taxon>
        <taxon>Eutheria</taxon>
        <taxon>Euarchontoglires</taxon>
        <taxon>Glires</taxon>
        <taxon>Rodentia</taxon>
        <taxon>Myomorpha</taxon>
        <taxon>Muroidea</taxon>
        <taxon>Muridae</taxon>
        <taxon>Murinae</taxon>
        <taxon>Rattus</taxon>
    </lineage>
</organism>
<gene>
    <name type="primary">Capn6</name>
    <name type="synonym">Capa6</name>
</gene>
<feature type="chain" id="PRO_0000207719" description="Calpain-6">
    <location>
        <begin position="1"/>
        <end position="641"/>
    </location>
</feature>
<feature type="domain" description="Calpain catalytic" evidence="3">
    <location>
        <begin position="26"/>
        <end position="343"/>
    </location>
</feature>
<feature type="domain" description="C2" evidence="2">
    <location>
        <begin position="498"/>
        <end position="621"/>
    </location>
</feature>
<feature type="region of interest" description="Domain III">
    <location>
        <begin position="344"/>
        <end position="495"/>
    </location>
</feature>
<name>CAN6_RAT</name>
<accession>O88501</accession>
<dbReference type="EMBL" id="AF067793">
    <property type="protein sequence ID" value="AAC19367.1"/>
    <property type="molecule type" value="mRNA"/>
</dbReference>
<dbReference type="RefSeq" id="NP_113996.1">
    <property type="nucleotide sequence ID" value="NM_031808.1"/>
</dbReference>
<dbReference type="SMR" id="O88501"/>
<dbReference type="FunCoup" id="O88501">
    <property type="interactions" value="30"/>
</dbReference>
<dbReference type="STRING" id="10116.ENSRNOP00000006638"/>
<dbReference type="MEROPS" id="C02.971"/>
<dbReference type="PhosphoSitePlus" id="O88501"/>
<dbReference type="PaxDb" id="10116-ENSRNOP00000006638"/>
<dbReference type="GeneID" id="83685"/>
<dbReference type="KEGG" id="rno:83685"/>
<dbReference type="AGR" id="RGD:70960"/>
<dbReference type="CTD" id="827"/>
<dbReference type="RGD" id="70960">
    <property type="gene designation" value="Capn6"/>
</dbReference>
<dbReference type="eggNOG" id="KOG0045">
    <property type="taxonomic scope" value="Eukaryota"/>
</dbReference>
<dbReference type="InParanoid" id="O88501"/>
<dbReference type="PhylomeDB" id="O88501"/>
<dbReference type="Reactome" id="R-RNO-1474228">
    <property type="pathway name" value="Degradation of the extracellular matrix"/>
</dbReference>
<dbReference type="PRO" id="PR:O88501"/>
<dbReference type="Proteomes" id="UP000002494">
    <property type="component" value="Unplaced"/>
</dbReference>
<dbReference type="GO" id="GO:0005737">
    <property type="term" value="C:cytoplasm"/>
    <property type="evidence" value="ECO:0000318"/>
    <property type="project" value="GO_Central"/>
</dbReference>
<dbReference type="GO" id="GO:0005874">
    <property type="term" value="C:microtubule"/>
    <property type="evidence" value="ECO:0000266"/>
    <property type="project" value="RGD"/>
</dbReference>
<dbReference type="GO" id="GO:0048471">
    <property type="term" value="C:perinuclear region of cytoplasm"/>
    <property type="evidence" value="ECO:0000266"/>
    <property type="project" value="RGD"/>
</dbReference>
<dbReference type="GO" id="GO:0005876">
    <property type="term" value="C:spindle microtubule"/>
    <property type="evidence" value="ECO:0000266"/>
    <property type="project" value="RGD"/>
</dbReference>
<dbReference type="GO" id="GO:0008017">
    <property type="term" value="F:microtubule binding"/>
    <property type="evidence" value="ECO:0000250"/>
    <property type="project" value="UniProtKB"/>
</dbReference>
<dbReference type="GO" id="GO:0001578">
    <property type="term" value="P:microtubule bundle formation"/>
    <property type="evidence" value="ECO:0000250"/>
    <property type="project" value="UniProtKB"/>
</dbReference>
<dbReference type="GO" id="GO:0051493">
    <property type="term" value="P:regulation of cytoskeleton organization"/>
    <property type="evidence" value="ECO:0000250"/>
    <property type="project" value="UniProtKB"/>
</dbReference>
<dbReference type="CDD" id="cd04046">
    <property type="entry name" value="C2_Calpain"/>
    <property type="match status" value="1"/>
</dbReference>
<dbReference type="CDD" id="cd00214">
    <property type="entry name" value="Calpain_III"/>
    <property type="match status" value="1"/>
</dbReference>
<dbReference type="CDD" id="cd00044">
    <property type="entry name" value="CysPc"/>
    <property type="match status" value="1"/>
</dbReference>
<dbReference type="FunFam" id="2.60.120.380:FF:000009">
    <property type="entry name" value="Calpain-6"/>
    <property type="match status" value="1"/>
</dbReference>
<dbReference type="FunFam" id="2.60.40.150:FF:000131">
    <property type="entry name" value="calpain-6"/>
    <property type="match status" value="1"/>
</dbReference>
<dbReference type="FunFam" id="3.90.70.10:FF:000064">
    <property type="entry name" value="calpain-6"/>
    <property type="match status" value="1"/>
</dbReference>
<dbReference type="Gene3D" id="2.60.120.380">
    <property type="match status" value="1"/>
</dbReference>
<dbReference type="Gene3D" id="2.60.40.150">
    <property type="entry name" value="C2 domain"/>
    <property type="match status" value="1"/>
</dbReference>
<dbReference type="Gene3D" id="3.90.70.10">
    <property type="entry name" value="Cysteine proteinases"/>
    <property type="match status" value="1"/>
</dbReference>
<dbReference type="InterPro" id="IPR033884">
    <property type="entry name" value="C2_Calpain"/>
</dbReference>
<dbReference type="InterPro" id="IPR000008">
    <property type="entry name" value="C2_dom"/>
</dbReference>
<dbReference type="InterPro" id="IPR035892">
    <property type="entry name" value="C2_domain_sf"/>
</dbReference>
<dbReference type="InterPro" id="IPR033883">
    <property type="entry name" value="C2_III"/>
</dbReference>
<dbReference type="InterPro" id="IPR022684">
    <property type="entry name" value="Calpain_cysteine_protease"/>
</dbReference>
<dbReference type="InterPro" id="IPR022682">
    <property type="entry name" value="Calpain_domain_III"/>
</dbReference>
<dbReference type="InterPro" id="IPR022683">
    <property type="entry name" value="Calpain_III"/>
</dbReference>
<dbReference type="InterPro" id="IPR036213">
    <property type="entry name" value="Calpain_III_sf"/>
</dbReference>
<dbReference type="InterPro" id="IPR038765">
    <property type="entry name" value="Papain-like_cys_pep_sf"/>
</dbReference>
<dbReference type="InterPro" id="IPR001300">
    <property type="entry name" value="Peptidase_C2_calpain_cat"/>
</dbReference>
<dbReference type="PANTHER" id="PTHR10183">
    <property type="entry name" value="CALPAIN"/>
    <property type="match status" value="1"/>
</dbReference>
<dbReference type="PANTHER" id="PTHR10183:SF381">
    <property type="entry name" value="CALPAIN-6"/>
    <property type="match status" value="1"/>
</dbReference>
<dbReference type="Pfam" id="PF00168">
    <property type="entry name" value="C2"/>
    <property type="match status" value="1"/>
</dbReference>
<dbReference type="Pfam" id="PF01067">
    <property type="entry name" value="Calpain_III"/>
    <property type="match status" value="1"/>
</dbReference>
<dbReference type="Pfam" id="PF00648">
    <property type="entry name" value="Peptidase_C2"/>
    <property type="match status" value="1"/>
</dbReference>
<dbReference type="PRINTS" id="PR00704">
    <property type="entry name" value="CALPAIN"/>
</dbReference>
<dbReference type="SMART" id="SM00239">
    <property type="entry name" value="C2"/>
    <property type="match status" value="1"/>
</dbReference>
<dbReference type="SMART" id="SM00720">
    <property type="entry name" value="calpain_III"/>
    <property type="match status" value="1"/>
</dbReference>
<dbReference type="SMART" id="SM00230">
    <property type="entry name" value="CysPc"/>
    <property type="match status" value="1"/>
</dbReference>
<dbReference type="SUPFAM" id="SSF49562">
    <property type="entry name" value="C2 domain (Calcium/lipid-binding domain, CaLB)"/>
    <property type="match status" value="1"/>
</dbReference>
<dbReference type="SUPFAM" id="SSF49758">
    <property type="entry name" value="Calpain large subunit, middle domain (domain III)"/>
    <property type="match status" value="1"/>
</dbReference>
<dbReference type="SUPFAM" id="SSF54001">
    <property type="entry name" value="Cysteine proteinases"/>
    <property type="match status" value="1"/>
</dbReference>
<dbReference type="PROSITE" id="PS50004">
    <property type="entry name" value="C2"/>
    <property type="match status" value="1"/>
</dbReference>
<dbReference type="PROSITE" id="PS50203">
    <property type="entry name" value="CALPAIN_CAT"/>
    <property type="match status" value="1"/>
</dbReference>
<reference key="1">
    <citation type="submission" date="1998-05" db="EMBL/GenBank/DDBJ databases">
        <title>Cellular genes modulated by a transactivator Tax of HTLV-1.</title>
        <authorList>
            <person name="Shimizu T."/>
        </authorList>
    </citation>
    <scope>NUCLEOTIDE SEQUENCE [MRNA]</scope>
    <source>
        <strain>Fischer</strain>
    </source>
</reference>
<comment type="function">
    <text evidence="1">Microtubule-stabilizing protein that may be involved in the regulation of microtubule dynamics and cytoskeletal organization. May act as a regulator of RAC1 activity through interaction with ARHGEF2 to control lamellipodial formation and cell mobility. Does not seem to have protease activity as it has lost the active site residues (By similarity).</text>
</comment>
<comment type="subunit">
    <text evidence="1">Interacts (via domain III) with microtubules. Interacts (via domain II) with ARHGEF2 (via the N-terminal zinc finger).</text>
</comment>
<comment type="subcellular location">
    <subcellularLocation>
        <location evidence="1">Cytoplasm</location>
        <location evidence="1">Perinuclear region</location>
    </subcellularLocation>
    <subcellularLocation>
        <location evidence="1">Cytoplasm</location>
        <location evidence="1">Cytoskeleton</location>
        <location evidence="1">Spindle</location>
    </subcellularLocation>
</comment>
<comment type="similarity">
    <text evidence="4">Belongs to the peptidase C2 family.</text>
</comment>
<keyword id="KW-0963">Cytoplasm</keyword>
<keyword id="KW-0206">Cytoskeleton</keyword>
<keyword id="KW-0493">Microtubule</keyword>
<keyword id="KW-1185">Reference proteome</keyword>
<sequence length="641" mass="74560">MGPPLKLFKNQKYQELKQDCMKDGRLFCDPTFLPENDSLFFNRLLPGKVVWKRPQDISDDPHLIVGNISNHQLIQGRLGNKAMISAFSCLAVQESHWTKAIPNHKEQEWDPRKPEKYAGIFRFRFWHFGEWTEVVIDDLLPTINGDLVFSFSTSMNEFWNALLEKAYAKLLGCYEALDGLTITDIIMDFTGTLAEIIDMQKGRYTDLVEEKYKLFGELYKTFTKGGLISCSIESPSQEEQEVETDWGLLKGYTYTMTDIRKLRLGERLVEVFSTEKLYMVRLRNPLGRQEWSGPWSEISEEWQQLTVTDRKNLGLVMSDDGEFWMSLEDFCHNFHKLNVCRNVNNPVFGRKELESVVGCWTVDDDPLMNRSGGCYNNRDTFLQNPQYIFTVPEDGHKVIMSLQQKDLRTYRRMGRPDNYIIGFELFKVEMNRRFRLHHLYIQERAGTSTYIDTRTVFLSKYLKKGNYVLVPTMFQHGRTSEFLLRIFSEVPVQLRELTLDMPKMSCWNLARGYPKVVTQITVHSAEGLEKKYANETVNPYLTIKCGKEEVRSPVQKNTVHAIFDTQAIFYRRTTDIPIIIQVWNSRKFCDQFLGQVTLDADPSDCRDLKSLYLRKKGGPTAKVKQGHISFKVISSDDLTEL</sequence>
<proteinExistence type="evidence at transcript level"/>
<protein>
    <recommendedName>
        <fullName>Calpain-6</fullName>
    </recommendedName>
</protein>
<evidence type="ECO:0000250" key="1"/>
<evidence type="ECO:0000255" key="2">
    <source>
        <dbReference type="PROSITE-ProRule" id="PRU00041"/>
    </source>
</evidence>
<evidence type="ECO:0000255" key="3">
    <source>
        <dbReference type="PROSITE-ProRule" id="PRU00239"/>
    </source>
</evidence>
<evidence type="ECO:0000305" key="4"/>